<comment type="catalytic activity">
    <reaction evidence="1">
        <text>L-glutamine + H2O = L-glutamate + NH4(+)</text>
        <dbReference type="Rhea" id="RHEA:15889"/>
        <dbReference type="ChEBI" id="CHEBI:15377"/>
        <dbReference type="ChEBI" id="CHEBI:28938"/>
        <dbReference type="ChEBI" id="CHEBI:29985"/>
        <dbReference type="ChEBI" id="CHEBI:58359"/>
        <dbReference type="EC" id="3.5.1.2"/>
    </reaction>
</comment>
<comment type="subunit">
    <text evidence="1">Homotetramer.</text>
</comment>
<comment type="similarity">
    <text evidence="1">Belongs to the glutaminase family.</text>
</comment>
<protein>
    <recommendedName>
        <fullName evidence="1">Glutaminase</fullName>
        <ecNumber evidence="1">3.5.1.2</ecNumber>
    </recommendedName>
</protein>
<evidence type="ECO:0000255" key="1">
    <source>
        <dbReference type="HAMAP-Rule" id="MF_00313"/>
    </source>
</evidence>
<proteinExistence type="inferred from homology"/>
<gene>
    <name evidence="1" type="primary">glsA</name>
    <name type="ordered locus">lpl0295</name>
</gene>
<dbReference type="EC" id="3.5.1.2" evidence="1"/>
<dbReference type="EMBL" id="CR628337">
    <property type="protein sequence ID" value="CAH14526.1"/>
    <property type="molecule type" value="Genomic_DNA"/>
</dbReference>
<dbReference type="RefSeq" id="WP_011214559.1">
    <property type="nucleotide sequence ID" value="NC_006369.1"/>
</dbReference>
<dbReference type="SMR" id="Q5WZT6"/>
<dbReference type="KEGG" id="lpf:lpl0295"/>
<dbReference type="LegioList" id="lpl0295"/>
<dbReference type="HOGENOM" id="CLU_027932_1_0_6"/>
<dbReference type="Proteomes" id="UP000002517">
    <property type="component" value="Chromosome"/>
</dbReference>
<dbReference type="GO" id="GO:0004359">
    <property type="term" value="F:glutaminase activity"/>
    <property type="evidence" value="ECO:0007669"/>
    <property type="project" value="UniProtKB-UniRule"/>
</dbReference>
<dbReference type="GO" id="GO:0006537">
    <property type="term" value="P:glutamate biosynthetic process"/>
    <property type="evidence" value="ECO:0007669"/>
    <property type="project" value="TreeGrafter"/>
</dbReference>
<dbReference type="GO" id="GO:0006543">
    <property type="term" value="P:glutamine catabolic process"/>
    <property type="evidence" value="ECO:0007669"/>
    <property type="project" value="TreeGrafter"/>
</dbReference>
<dbReference type="Gene3D" id="3.40.710.10">
    <property type="entry name" value="DD-peptidase/beta-lactamase superfamily"/>
    <property type="match status" value="1"/>
</dbReference>
<dbReference type="HAMAP" id="MF_00313">
    <property type="entry name" value="Glutaminase"/>
    <property type="match status" value="1"/>
</dbReference>
<dbReference type="InterPro" id="IPR012338">
    <property type="entry name" value="Beta-lactam/transpept-like"/>
</dbReference>
<dbReference type="InterPro" id="IPR015868">
    <property type="entry name" value="Glutaminase"/>
</dbReference>
<dbReference type="NCBIfam" id="TIGR03814">
    <property type="entry name" value="Gln_ase"/>
    <property type="match status" value="1"/>
</dbReference>
<dbReference type="PANTHER" id="PTHR12544">
    <property type="entry name" value="GLUTAMINASE"/>
    <property type="match status" value="1"/>
</dbReference>
<dbReference type="PANTHER" id="PTHR12544:SF29">
    <property type="entry name" value="GLUTAMINASE"/>
    <property type="match status" value="1"/>
</dbReference>
<dbReference type="Pfam" id="PF04960">
    <property type="entry name" value="Glutaminase"/>
    <property type="match status" value="1"/>
</dbReference>
<dbReference type="SUPFAM" id="SSF56601">
    <property type="entry name" value="beta-lactamase/transpeptidase-like"/>
    <property type="match status" value="1"/>
</dbReference>
<reference key="1">
    <citation type="journal article" date="2004" name="Nat. Genet.">
        <title>Evidence in the Legionella pneumophila genome for exploitation of host cell functions and high genome plasticity.</title>
        <authorList>
            <person name="Cazalet C."/>
            <person name="Rusniok C."/>
            <person name="Brueggemann H."/>
            <person name="Zidane N."/>
            <person name="Magnier A."/>
            <person name="Ma L."/>
            <person name="Tichit M."/>
            <person name="Jarraud S."/>
            <person name="Bouchier C."/>
            <person name="Vandenesch F."/>
            <person name="Kunst F."/>
            <person name="Etienne J."/>
            <person name="Glaser P."/>
            <person name="Buchrieser C."/>
        </authorList>
    </citation>
    <scope>NUCLEOTIDE SEQUENCE [LARGE SCALE GENOMIC DNA]</scope>
    <source>
        <strain>Lens</strain>
    </source>
</reference>
<sequence length="310" mass="33937">MSSKLLTIQLLEELVHAAELNQEGKTADYIPELANVNQELTAIAVQTLGEKTLAYSNNPLHPVTLQSTGKMIPLIGLLEEFGADQLFEWVKVEPSGDDFASITRLEQFGPKPSNPMLNAGAIALCSRIPGVGEQQFRWLEHWVQKLFNQRLSINPLVFASEKRTGNRNRALAYLLKSRNNLGADVHETLDLYFALCSYEAMLDQMLYLPTLLANSGKDSDTGEQILSMETCKITLAIMATCGLYDETGTHMVKTGMPAKSGVSGYTIAVVPGKAGIVVLSPRVNAKGNSIRGEIMLEGLSKAMNWHFALP</sequence>
<accession>Q5WZT6</accession>
<name>GLSA_LEGPL</name>
<keyword id="KW-0378">Hydrolase</keyword>
<feature type="chain" id="PRO_1000079076" description="Glutaminase">
    <location>
        <begin position="1"/>
        <end position="310"/>
    </location>
</feature>
<feature type="binding site" evidence="1">
    <location>
        <position position="67"/>
    </location>
    <ligand>
        <name>substrate</name>
    </ligand>
</feature>
<feature type="binding site" evidence="1">
    <location>
        <position position="118"/>
    </location>
    <ligand>
        <name>substrate</name>
    </ligand>
</feature>
<feature type="binding site" evidence="1">
    <location>
        <position position="161"/>
    </location>
    <ligand>
        <name>substrate</name>
    </ligand>
</feature>
<feature type="binding site" evidence="1">
    <location>
        <position position="168"/>
    </location>
    <ligand>
        <name>substrate</name>
    </ligand>
</feature>
<feature type="binding site" evidence="1">
    <location>
        <position position="192"/>
    </location>
    <ligand>
        <name>substrate</name>
    </ligand>
</feature>
<feature type="binding site" evidence="1">
    <location>
        <position position="244"/>
    </location>
    <ligand>
        <name>substrate</name>
    </ligand>
</feature>
<feature type="binding site" evidence="1">
    <location>
        <position position="262"/>
    </location>
    <ligand>
        <name>substrate</name>
    </ligand>
</feature>
<organism>
    <name type="scientific">Legionella pneumophila (strain Lens)</name>
    <dbReference type="NCBI Taxonomy" id="297245"/>
    <lineage>
        <taxon>Bacteria</taxon>
        <taxon>Pseudomonadati</taxon>
        <taxon>Pseudomonadota</taxon>
        <taxon>Gammaproteobacteria</taxon>
        <taxon>Legionellales</taxon>
        <taxon>Legionellaceae</taxon>
        <taxon>Legionella</taxon>
    </lineage>
</organism>